<reference key="1">
    <citation type="submission" date="2006-10" db="EMBL/GenBank/DDBJ databases">
        <authorList>
            <person name="Fleischmann R.D."/>
            <person name="Dodson R.J."/>
            <person name="Haft D.H."/>
            <person name="Merkel J.S."/>
            <person name="Nelson W.C."/>
            <person name="Fraser C.M."/>
        </authorList>
    </citation>
    <scope>NUCLEOTIDE SEQUENCE [LARGE SCALE GENOMIC DNA]</scope>
    <source>
        <strain>ATCC 700084 / mc(2)155</strain>
    </source>
</reference>
<reference key="2">
    <citation type="journal article" date="2007" name="Genome Biol.">
        <title>Interrupted coding sequences in Mycobacterium smegmatis: authentic mutations or sequencing errors?</title>
        <authorList>
            <person name="Deshayes C."/>
            <person name="Perrodou E."/>
            <person name="Gallien S."/>
            <person name="Euphrasie D."/>
            <person name="Schaeffer C."/>
            <person name="Van-Dorsselaer A."/>
            <person name="Poch O."/>
            <person name="Lecompte O."/>
            <person name="Reyrat J.-M."/>
        </authorList>
    </citation>
    <scope>NUCLEOTIDE SEQUENCE [LARGE SCALE GENOMIC DNA]</scope>
    <source>
        <strain>ATCC 700084 / mc(2)155</strain>
    </source>
</reference>
<reference key="3">
    <citation type="journal article" date="2009" name="Genome Res.">
        <title>Ortho-proteogenomics: multiple proteomes investigation through orthology and a new MS-based protocol.</title>
        <authorList>
            <person name="Gallien S."/>
            <person name="Perrodou E."/>
            <person name="Carapito C."/>
            <person name="Deshayes C."/>
            <person name="Reyrat J.-M."/>
            <person name="Van Dorsselaer A."/>
            <person name="Poch O."/>
            <person name="Schaeffer C."/>
            <person name="Lecompte O."/>
        </authorList>
    </citation>
    <scope>NUCLEOTIDE SEQUENCE [LARGE SCALE GENOMIC DNA]</scope>
    <source>
        <strain>ATCC 700084 / mc(2)155</strain>
    </source>
</reference>
<reference key="4">
    <citation type="journal article" date="2008" name="Mol. Microbiol.">
        <title>The specialized secretory apparatus ESX-1 is essential for DNA transfer in Mycobacterium smegmatis.</title>
        <authorList>
            <person name="Coros A."/>
            <person name="Callahan B."/>
            <person name="Battaglioli E."/>
            <person name="Derbyshire K.M."/>
        </authorList>
    </citation>
    <scope>FUNCTION</scope>
    <scope>DISRUPTION PHENOTYPE</scope>
    <source>
        <strain>ATCC 700084 / mc(2)155</strain>
        <strain>MKD8</strain>
    </source>
</reference>
<reference key="5">
    <citation type="journal article" date="2012" name="Mol. Microbiol.">
        <title>Polar assembly and scaffolding proteins of the virulence-associated ESX-1 secretory apparatus in mycobacteria.</title>
        <authorList>
            <person name="Wirth S.E."/>
            <person name="Krywy J.A."/>
            <person name="Aldridge B.B."/>
            <person name="Fortune S.M."/>
            <person name="Fernandez-Suarez M."/>
            <person name="Gray T.A."/>
            <person name="Derbyshire K.M."/>
        </authorList>
    </citation>
    <scope>FUNCTION</scope>
    <scope>SUBCELLULAR LOCATION</scope>
    <scope>DISRUPTION PHENOTYPE</scope>
    <source>
        <strain>ATCC 700084 / mc(2)155</strain>
    </source>
</reference>
<organism>
    <name type="scientific">Mycolicibacterium smegmatis (strain ATCC 700084 / mc(2)155)</name>
    <name type="common">Mycobacterium smegmatis</name>
    <dbReference type="NCBI Taxonomy" id="246196"/>
    <lineage>
        <taxon>Bacteria</taxon>
        <taxon>Bacillati</taxon>
        <taxon>Actinomycetota</taxon>
        <taxon>Actinomycetes</taxon>
        <taxon>Mycobacteriales</taxon>
        <taxon>Mycobacteriaceae</taxon>
        <taxon>Mycolicibacterium</taxon>
    </lineage>
</organism>
<gene>
    <name evidence="4" type="primary">saeA</name>
    <name type="ordered locus">MSMEG_0044</name>
    <name type="ordered locus">MSMEI_0046</name>
</gene>
<accession>A0QNH4</accession>
<accession>I7FCB7</accession>
<sequence>MGERGELVSDLHPSDDHDADPRLAPLLAWRQQLVDSGAVAPRSFKEAHLRLVLRSGRTDVEQIRAMLPGSVAEHAEEMARILAELTPAAPEPDPPPVPEPQPEPEPGPGKHRSPETDEPPVATTTEIPIPTTGFAPFQFSSQQVALHDITVQRTDAAVELSWPPYEAPEDEAAQDISVVMYRVVSSDDQAPYSPDPAHLVALTEEPKATDERQQVSPVRHYQVWVNVGASEAAARKTQPVLYATAVLVRPVTGFEIREDAGWVIGQWTAPPGVTAVHVFRVPIDEVDRDEAQYRILTAGENLAGFVDTEPVRGQRYRYRARCAVNVDGVVRLSEAAEADVELAAALMPVTDLVVETAADGASCDLSWTPPAGGQVAIYRSQNGPSADAEAIELPQGALEQVGLTPELRVTQDLTEETGSDGRRRARLTGVTWPSEWSRAYFTPVTLMGERAMLGRTLSSVRTGTIRDIELAEYCNKQVLTFDWPDGAASVIVYLAPKGHDPRSGLNGRSFEISLEEYERYGGMHLTGQLPVGGCSLHLAPVAFAGGRRVVGAFSSIEYRGLLRLQYAVRIGRDPNGFPTTATIALRAEQNVPGSPGFVLVNNPQRLPLSVHDGHPVDVAPLDARGQLADHPSKELRWSALTTSGDGELWAANLSGLQGWIRLFVNIGSPAQLRVIALLDPPVETLRLTAATL</sequence>
<protein>
    <recommendedName>
        <fullName>Putative ESX-1 scaffolding and assembly protein SaeA</fullName>
    </recommendedName>
</protein>
<proteinExistence type="predicted"/>
<dbReference type="EMBL" id="CP000480">
    <property type="protein sequence ID" value="ABK72207.1"/>
    <property type="molecule type" value="Genomic_DNA"/>
</dbReference>
<dbReference type="EMBL" id="CP001663">
    <property type="protein sequence ID" value="AFP36528.1"/>
    <property type="status" value="ALT_INIT"/>
    <property type="molecule type" value="Genomic_DNA"/>
</dbReference>
<dbReference type="RefSeq" id="WP_011726628.1">
    <property type="nucleotide sequence ID" value="NZ_SIJM01000001.1"/>
</dbReference>
<dbReference type="RefSeq" id="YP_884462.1">
    <property type="nucleotide sequence ID" value="NC_008596.1"/>
</dbReference>
<dbReference type="SMR" id="A0QNH4"/>
<dbReference type="STRING" id="246196.MSMEG_0044"/>
<dbReference type="PaxDb" id="246196-MSMEI_0046"/>
<dbReference type="KEGG" id="msg:MSMEI_0046"/>
<dbReference type="KEGG" id="msm:MSMEG_0044"/>
<dbReference type="PATRIC" id="fig|246196.19.peg.42"/>
<dbReference type="eggNOG" id="ENOG50332MG">
    <property type="taxonomic scope" value="Bacteria"/>
</dbReference>
<dbReference type="OrthoDB" id="4362456at2"/>
<dbReference type="Proteomes" id="UP000000757">
    <property type="component" value="Chromosome"/>
</dbReference>
<dbReference type="Proteomes" id="UP000006158">
    <property type="component" value="Chromosome"/>
</dbReference>
<dbReference type="GO" id="GO:0005737">
    <property type="term" value="C:cytoplasm"/>
    <property type="evidence" value="ECO:0007669"/>
    <property type="project" value="UniProtKB-SubCell"/>
</dbReference>
<comment type="function">
    <text evidence="2 7">May be involved in assembly of the ESX-1 / type VII specialized secretion system (T7SS), which exports several proteins including EsxA and EsxB (PubMed:22233444). Involved in DNA conjugation in recipient (MKD8) but not donor (mc(2)155) strain (PubMed:18554329).</text>
</comment>
<comment type="subcellular location">
    <subcellularLocation>
        <location evidence="3">Cytoplasm</location>
    </subcellularLocation>
    <text evidence="3">Localizes at or near the cell pole in (on average) 1 discrete spot. Polar localization does not require ESX-1 genes (PubMed:22233444).</text>
</comment>
<comment type="disruption phenotype">
    <text evidence="2 3">Loss of DNA conjugation when disrupted in recipient strain (MKD8), no effect when disrupted in donor strain (mc(2)155) (PubMed:18554329). The recipient strain does not secrete EsxB (PubMed:18554329). Disruption of the probable saeA-saeB-saeC operon completely blocks polar localization of EccCb1 (PubMed:22233444).</text>
</comment>
<comment type="miscellaneous">
    <text evidence="6">DNA conjugation in M.smegmatis is unidirectional with distinct donor and recipient strains; mc(2)155 is a donor strain while MKD8 is a recipient strain. Mutations in a donor strain that alter DNA transfer do not always alter DNA transfer in a recipient strain.</text>
</comment>
<comment type="sequence caution" evidence="5">
    <conflict type="erroneous initiation">
        <sequence resource="EMBL-CDS" id="AFP36528"/>
    </conflict>
    <text>Extended N-terminus.</text>
</comment>
<name>SAEA_MYCS2</name>
<evidence type="ECO:0000256" key="1">
    <source>
        <dbReference type="SAM" id="MobiDB-lite"/>
    </source>
</evidence>
<evidence type="ECO:0000269" key="2">
    <source>
    </source>
</evidence>
<evidence type="ECO:0000269" key="3">
    <source>
    </source>
</evidence>
<evidence type="ECO:0000303" key="4">
    <source>
    </source>
</evidence>
<evidence type="ECO:0000305" key="5"/>
<evidence type="ECO:0000305" key="6">
    <source>
    </source>
</evidence>
<evidence type="ECO:0000305" key="7">
    <source>
    </source>
</evidence>
<keyword id="KW-0963">Cytoplasm</keyword>
<keyword id="KW-1185">Reference proteome</keyword>
<feature type="chain" id="PRO_0000438351" description="Putative ESX-1 scaffolding and assembly protein SaeA">
    <location>
        <begin position="1"/>
        <end position="692"/>
    </location>
</feature>
<feature type="region of interest" description="Disordered" evidence="1">
    <location>
        <begin position="1"/>
        <end position="23"/>
    </location>
</feature>
<feature type="region of interest" description="Disordered" evidence="1">
    <location>
        <begin position="87"/>
        <end position="134"/>
    </location>
</feature>
<feature type="compositionally biased region" description="Basic and acidic residues" evidence="1">
    <location>
        <begin position="1"/>
        <end position="21"/>
    </location>
</feature>
<feature type="compositionally biased region" description="Pro residues" evidence="1">
    <location>
        <begin position="89"/>
        <end position="107"/>
    </location>
</feature>